<reference key="1">
    <citation type="submission" date="2005-09" db="EMBL/GenBank/DDBJ databases">
        <title>Annotation of the Aspergillus terreus NIH2624 genome.</title>
        <authorList>
            <person name="Birren B.W."/>
            <person name="Lander E.S."/>
            <person name="Galagan J.E."/>
            <person name="Nusbaum C."/>
            <person name="Devon K."/>
            <person name="Henn M."/>
            <person name="Ma L.-J."/>
            <person name="Jaffe D.B."/>
            <person name="Butler J."/>
            <person name="Alvarez P."/>
            <person name="Gnerre S."/>
            <person name="Grabherr M."/>
            <person name="Kleber M."/>
            <person name="Mauceli E.W."/>
            <person name="Brockman W."/>
            <person name="Rounsley S."/>
            <person name="Young S.K."/>
            <person name="LaButti K."/>
            <person name="Pushparaj V."/>
            <person name="DeCaprio D."/>
            <person name="Crawford M."/>
            <person name="Koehrsen M."/>
            <person name="Engels R."/>
            <person name="Montgomery P."/>
            <person name="Pearson M."/>
            <person name="Howarth C."/>
            <person name="Larson L."/>
            <person name="Luoma S."/>
            <person name="White J."/>
            <person name="Alvarado L."/>
            <person name="Kodira C.D."/>
            <person name="Zeng Q."/>
            <person name="Oleary S."/>
            <person name="Yandava C."/>
            <person name="Denning D.W."/>
            <person name="Nierman W.C."/>
            <person name="Milne T."/>
            <person name="Madden K."/>
        </authorList>
    </citation>
    <scope>NUCLEOTIDE SEQUENCE [LARGE SCALE GENOMIC DNA]</scope>
    <source>
        <strain>NIH 2624 / FGSC A1156</strain>
    </source>
</reference>
<dbReference type="EMBL" id="CH476597">
    <property type="protein sequence ID" value="EAU36628.1"/>
    <property type="molecule type" value="Genomic_DNA"/>
</dbReference>
<dbReference type="RefSeq" id="XP_001212532.1">
    <property type="nucleotide sequence ID" value="XM_001212532.1"/>
</dbReference>
<dbReference type="SMR" id="Q0CSI0"/>
<dbReference type="STRING" id="341663.Q0CSI0"/>
<dbReference type="EnsemblFungi" id="EAU36628">
    <property type="protein sequence ID" value="EAU36628"/>
    <property type="gene ID" value="ATEG_03354"/>
</dbReference>
<dbReference type="GeneID" id="4317808"/>
<dbReference type="VEuPathDB" id="FungiDB:ATEG_03354"/>
<dbReference type="eggNOG" id="KOG2993">
    <property type="taxonomic scope" value="Eukaryota"/>
</dbReference>
<dbReference type="HOGENOM" id="CLU_000626_1_0_1"/>
<dbReference type="OMA" id="AVWKRAP"/>
<dbReference type="OrthoDB" id="18982at2759"/>
<dbReference type="Proteomes" id="UP000007963">
    <property type="component" value="Unassembled WGS sequence"/>
</dbReference>
<dbReference type="GO" id="GO:0005789">
    <property type="term" value="C:endoplasmic reticulum membrane"/>
    <property type="evidence" value="ECO:0007669"/>
    <property type="project" value="UniProtKB-SubCell"/>
</dbReference>
<dbReference type="GO" id="GO:0061908">
    <property type="term" value="C:phagophore"/>
    <property type="evidence" value="ECO:0007669"/>
    <property type="project" value="TreeGrafter"/>
</dbReference>
<dbReference type="GO" id="GO:0034045">
    <property type="term" value="C:phagophore assembly site membrane"/>
    <property type="evidence" value="ECO:0007669"/>
    <property type="project" value="UniProtKB-SubCell"/>
</dbReference>
<dbReference type="GO" id="GO:0032266">
    <property type="term" value="F:phosphatidylinositol-3-phosphate binding"/>
    <property type="evidence" value="ECO:0007669"/>
    <property type="project" value="TreeGrafter"/>
</dbReference>
<dbReference type="GO" id="GO:0043495">
    <property type="term" value="F:protein-membrane adaptor activity"/>
    <property type="evidence" value="ECO:0007669"/>
    <property type="project" value="TreeGrafter"/>
</dbReference>
<dbReference type="GO" id="GO:0000045">
    <property type="term" value="P:autophagosome assembly"/>
    <property type="evidence" value="ECO:0007669"/>
    <property type="project" value="TreeGrafter"/>
</dbReference>
<dbReference type="GO" id="GO:0000422">
    <property type="term" value="P:autophagy of mitochondrion"/>
    <property type="evidence" value="ECO:0007669"/>
    <property type="project" value="TreeGrafter"/>
</dbReference>
<dbReference type="GO" id="GO:0061723">
    <property type="term" value="P:glycophagy"/>
    <property type="evidence" value="ECO:0007669"/>
    <property type="project" value="TreeGrafter"/>
</dbReference>
<dbReference type="GO" id="GO:0006869">
    <property type="term" value="P:lipid transport"/>
    <property type="evidence" value="ECO:0007669"/>
    <property type="project" value="UniProtKB-KW"/>
</dbReference>
<dbReference type="GO" id="GO:0034727">
    <property type="term" value="P:piecemeal microautophagy of the nucleus"/>
    <property type="evidence" value="ECO:0007669"/>
    <property type="project" value="TreeGrafter"/>
</dbReference>
<dbReference type="GO" id="GO:0015031">
    <property type="term" value="P:protein transport"/>
    <property type="evidence" value="ECO:0007669"/>
    <property type="project" value="UniProtKB-KW"/>
</dbReference>
<dbReference type="GO" id="GO:0061709">
    <property type="term" value="P:reticulophagy"/>
    <property type="evidence" value="ECO:0007669"/>
    <property type="project" value="TreeGrafter"/>
</dbReference>
<dbReference type="InterPro" id="IPR026849">
    <property type="entry name" value="ATG2"/>
</dbReference>
<dbReference type="PANTHER" id="PTHR13190">
    <property type="entry name" value="AUTOPHAGY-RELATED 2, ISOFORM A"/>
    <property type="match status" value="1"/>
</dbReference>
<dbReference type="PANTHER" id="PTHR13190:SF1">
    <property type="entry name" value="AUTOPHAGY-RELATED 2, ISOFORM A"/>
    <property type="match status" value="1"/>
</dbReference>
<dbReference type="Pfam" id="PF13329">
    <property type="entry name" value="ATG2_CAD"/>
    <property type="match status" value="1"/>
</dbReference>
<name>ATG2_ASPTN</name>
<evidence type="ECO:0000250" key="1">
    <source>
        <dbReference type="UniProtKB" id="O94649"/>
    </source>
</evidence>
<evidence type="ECO:0000250" key="2">
    <source>
        <dbReference type="UniProtKB" id="P53855"/>
    </source>
</evidence>
<evidence type="ECO:0000256" key="3">
    <source>
        <dbReference type="SAM" id="MobiDB-lite"/>
    </source>
</evidence>
<evidence type="ECO:0000305" key="4"/>
<proteinExistence type="inferred from homology"/>
<comment type="function">
    <text evidence="2">Lipid transfer protein required for autophagosome completion and peroxisome degradation. Tethers the edge of the isolation membrane (IM) to the endoplasmic reticulum (ER) and mediates direct lipid transfer from ER to IM for IM expansion. Atg2 binds to the ER exit site (ERES), which is the membrane source for autophagosome formation, using basic residues in its N-terminal region (NR) and to the expanding edge of the IM through its C-terminal region. The latter binding is assisted by an atg18-PtdIns3P interaction. Atg2 then extracts phospholipids from the membrane source using its NR and transfers them to atg9 to the IM through its predicted beta-sheet-rich structure for membrane expansion.</text>
</comment>
<comment type="catalytic activity">
    <reaction evidence="1">
        <text>a 1,2-diacyl-sn-glycero-3-phosphocholine(in) = a 1,2-diacyl-sn-glycero-3-phosphocholine(out)</text>
        <dbReference type="Rhea" id="RHEA:38571"/>
        <dbReference type="ChEBI" id="CHEBI:57643"/>
    </reaction>
</comment>
<comment type="catalytic activity">
    <reaction evidence="1">
        <text>a 1,2-diacyl-sn-glycero-3-phospho-L-serine(in) = a 1,2-diacyl-sn-glycero-3-phospho-L-serine(out)</text>
        <dbReference type="Rhea" id="RHEA:38663"/>
        <dbReference type="ChEBI" id="CHEBI:57262"/>
    </reaction>
</comment>
<comment type="catalytic activity">
    <reaction evidence="1">
        <text>a 1,2-diacyl-sn-glycero-3-phosphoethanolamine(in) = a 1,2-diacyl-sn-glycero-3-phosphoethanolamine(out)</text>
        <dbReference type="Rhea" id="RHEA:38895"/>
        <dbReference type="ChEBI" id="CHEBI:64612"/>
    </reaction>
</comment>
<comment type="subcellular location">
    <subcellularLocation>
        <location evidence="2">Preautophagosomal structure membrane</location>
        <topology evidence="2">Peripheral membrane protein</topology>
    </subcellularLocation>
    <subcellularLocation>
        <location evidence="2">Endoplasmic reticulum membrane</location>
        <topology evidence="2">Peripheral membrane protein</topology>
    </subcellularLocation>
</comment>
<comment type="similarity">
    <text evidence="4">Belongs to the ATG2 family.</text>
</comment>
<protein>
    <recommendedName>
        <fullName>Autophagy-related protein 2</fullName>
    </recommendedName>
</protein>
<sequence length="2082" mass="228258">MAYFLPSFFQKRLLRYALSRLELVDTEALDLDSLGIRWGQRSTVELRDIGLRLEKLSTLLRLPPSSELLSARIRLLRLTVPADIYSSGIIFQTSGIDVHLRLPLNDVSADQDTHRSPTDDTGDDHVLPNPTDLAESFLQAEPKEEKEELQAAISSQSQVLQHTSTSSSDDEEEFGLGEEAVSLPSFVAGFLKGVVERLQVEVEDVSIRVDVETKQDGPSKRQPEEKPDLVTGLISVRQINVGAVSKSHDSEEGILRWGKRQISVSDVNLALISDPIVFSNYSRFTAPPLSPSTPVQSRPSQPPSEVMSPSPELNPSDSNPGLGMTQSTIFAPPQSDDEPVPEAPHELEMAGSVYTYDGRFSDADTEETRSYGHLGDSQNFSDDDKLLDNPDYLDSVIDSHLHDEDLERSVNLPRDDAPSAREEDTPRLHDSSTFNFEPTMAHHTLQEVSSPTIHGQVLEDRTGSFGSASLGRDASSEHSLPEDSLSENQHAEEPQHEVRAHMSGSQPAPPSEEGSSSSTSNSFRDGDLSESKIYSHEEAQSMYMSAISHGSTSRSFVPNIPGAWDSPGSTATRYFDVHNRSQCSGDTNRTRDEKDETTAATPRLHAQAGSHIPQEYPLDGSRTAHSEATDKGSFESTQGLNKLNDIAKRFLTIDKMSIWVPSRDGTDEPSGAVSEMSFSHGGVDPNVSGHSERRSYPKRSQDETAIELHSAEIHFDISTGWLLAKVGQRVVDAFAHNDSETPKKSRSQQDSHSDQAISLSFGKFSIKFVEHIPGHAYPPEDSRIHSPTYFGLMHEDVLLQTTVAGLQAHYSETGNATKLRLELAKFTLGFASEDLISFSEDLKMRESVRDVLSPVHGDVSLSLTKSADSARVNIATLPLQVNINVQRLEDVLGWIGGLSTILELGNSIPSVSGVKAQKEPPKRSRGVHFEPSPPPVKESRQPSIPWKVDSRIGGMALDVVGETHYLKLRTTAVKVVSRQKGIAVQIDKAKLSGPLSLEGTRDAPAKVNFTNIRVEFLFSPDDDDLDRLLSLITPSKDKYDEDDDIMLDTLLRQRRQGSILRATVDGARVAISRIQDLEHLSQLGDELGKLSNVTKYLPEDDRPGILSLALVRDFEARMHVGGQVGDITVRLKEAETAYISIPSLVAARLGSMTVVRNEIEELVGEALPLHMAQAQHPMLMARFIADEMEPTIKVKVYNLRAEYTVPSMVAFLGLSDDMTAGKVAENMTSSLVNLADLPPPHISPVSGGHESPRGPVKPIKLAVVLRDSVIGLNPRGTAAKGLLVLTNAKFSGAIHDPASSEATLDLRKASVMVIDDVQNIGITDNPRQGRWTTPQSDQVHSFIEMGFVPISSISSATATIRIMQLSEDGTKSLDVEFRDDLLILETCADSTQTLISIVNGLQPPTPPSVAVKYRTEVLPIQDMLASFSGDAFATDAASPEHAAEGSSDLAQPANTKGNQIEDELEYVSDFYPVKPGSENASLHENLAGSGSNELLDSFHSQYYMSSSVSELDFRDDHFAKQSAVGGTAHRWDSTQNTYGLSDDSKLQKSPLRIRVRDAHVIWNLFDGYDWQRTRDTISKAVKDVEKRATEKRARVGNRASPGFDDDEESVIGDCLFNSIYIGIPANKDPRELRQDINRGIDDLASETGSYATTTTVTGATARQNHSPPFKKKLRLSRSKYHKMTFELKGICADLVVFPPDSGETQSSLDVRIKDLEIFDHVPTSTWKKFATYMHEAGEKESGTSMVHLEVLTVRPVPELAASEIVLKATILPLRLHVDQDALDFLSRFFEFRDDSAPASPSPQDIPFLQRVEVNSIPVKLDFKPKRVDYAGLQSGRTTEFMNFFVLDGADMVMRHVIIYGIAGFDKLGQTLNDIWMPDIKRNQLPSVLAGLAPIRSLVNVGGGVKDLVVVPMREYRKDGRIVRSIQKGAWSFAKTTSNELVKLGAKLAIGTQTVLQGAEEMLTSPNAPVPVSEEDSTDEEEAKKISLYADQPIGVVQGLRGAFRGLERDLLLARDAIVAVPGEIVESGSATAAAKAVWKRAPTVVLRPAIGVSKAVGQTLLGAGNTLDPSNRRKMEDKYKRH</sequence>
<keyword id="KW-0072">Autophagy</keyword>
<keyword id="KW-0256">Endoplasmic reticulum</keyword>
<keyword id="KW-0445">Lipid transport</keyword>
<keyword id="KW-0472">Membrane</keyword>
<keyword id="KW-0653">Protein transport</keyword>
<keyword id="KW-1185">Reference proteome</keyword>
<keyword id="KW-0813">Transport</keyword>
<organism>
    <name type="scientific">Aspergillus terreus (strain NIH 2624 / FGSC A1156)</name>
    <dbReference type="NCBI Taxonomy" id="341663"/>
    <lineage>
        <taxon>Eukaryota</taxon>
        <taxon>Fungi</taxon>
        <taxon>Dikarya</taxon>
        <taxon>Ascomycota</taxon>
        <taxon>Pezizomycotina</taxon>
        <taxon>Eurotiomycetes</taxon>
        <taxon>Eurotiomycetidae</taxon>
        <taxon>Eurotiales</taxon>
        <taxon>Aspergillaceae</taxon>
        <taxon>Aspergillus</taxon>
        <taxon>Aspergillus subgen. Circumdati</taxon>
    </lineage>
</organism>
<feature type="chain" id="PRO_0000317805" description="Autophagy-related protein 2">
    <location>
        <begin position="1"/>
        <end position="2082"/>
    </location>
</feature>
<feature type="region of interest" description="Disordered" evidence="3">
    <location>
        <begin position="108"/>
        <end position="130"/>
    </location>
</feature>
<feature type="region of interest" description="Disordered" evidence="3">
    <location>
        <begin position="144"/>
        <end position="175"/>
    </location>
</feature>
<feature type="region of interest" description="Disordered" evidence="3">
    <location>
        <begin position="285"/>
        <end position="343"/>
    </location>
</feature>
<feature type="region of interest" description="Disordered" evidence="3">
    <location>
        <begin position="365"/>
        <end position="435"/>
    </location>
</feature>
<feature type="region of interest" description="Disordered" evidence="3">
    <location>
        <begin position="462"/>
        <end position="527"/>
    </location>
</feature>
<feature type="region of interest" description="Disordered" evidence="3">
    <location>
        <begin position="580"/>
        <end position="636"/>
    </location>
</feature>
<feature type="region of interest" description="Disordered" evidence="3">
    <location>
        <begin position="662"/>
        <end position="702"/>
    </location>
</feature>
<feature type="region of interest" description="Disordered" evidence="3">
    <location>
        <begin position="912"/>
        <end position="943"/>
    </location>
</feature>
<feature type="region of interest" description="Disordered" evidence="3">
    <location>
        <begin position="1435"/>
        <end position="1454"/>
    </location>
</feature>
<feature type="region of interest" description="Disordered" evidence="3">
    <location>
        <begin position="2062"/>
        <end position="2082"/>
    </location>
</feature>
<feature type="compositionally biased region" description="Basic and acidic residues" evidence="3">
    <location>
        <begin position="111"/>
        <end position="126"/>
    </location>
</feature>
<feature type="compositionally biased region" description="Polar residues" evidence="3">
    <location>
        <begin position="152"/>
        <end position="162"/>
    </location>
</feature>
<feature type="compositionally biased region" description="Polar residues" evidence="3">
    <location>
        <begin position="311"/>
        <end position="329"/>
    </location>
</feature>
<feature type="compositionally biased region" description="Basic and acidic residues" evidence="3">
    <location>
        <begin position="397"/>
        <end position="430"/>
    </location>
</feature>
<feature type="compositionally biased region" description="Basic and acidic residues" evidence="3">
    <location>
        <begin position="489"/>
        <end position="500"/>
    </location>
</feature>
<feature type="compositionally biased region" description="Low complexity" evidence="3">
    <location>
        <begin position="503"/>
        <end position="522"/>
    </location>
</feature>
<feature type="compositionally biased region" description="Basic and acidic residues" evidence="3">
    <location>
        <begin position="588"/>
        <end position="597"/>
    </location>
</feature>
<feature type="compositionally biased region" description="Basic and acidic residues" evidence="3">
    <location>
        <begin position="622"/>
        <end position="633"/>
    </location>
</feature>
<feature type="compositionally biased region" description="Basic and acidic residues" evidence="3">
    <location>
        <begin position="690"/>
        <end position="702"/>
    </location>
</feature>
<feature type="compositionally biased region" description="Basic and acidic residues" evidence="3">
    <location>
        <begin position="2070"/>
        <end position="2082"/>
    </location>
</feature>
<gene>
    <name type="primary">atg2</name>
    <name type="ORF">ATEG_03354</name>
</gene>
<accession>Q0CSI0</accession>